<comment type="function">
    <text evidence="1">Probable lipolytic acyl hydrolase (LAH), an activity which is thought to be involved in the response of tubers to pathogens.</text>
</comment>
<comment type="subcellular location">
    <subcellularLocation>
        <location evidence="1">Vacuole</location>
    </subcellularLocation>
</comment>
<comment type="tissue specificity">
    <text evidence="4">Tuber.</text>
</comment>
<comment type="developmental stage">
    <text evidence="4">Accumulates progressively during tuber formation from stolon.</text>
</comment>
<comment type="domain">
    <text>The nitrogen atoms of the two glycine residues in the GGXR motif define the oxyanion hole, and stabilize the oxyanion that forms during the nucleophilic attack by the catalytic serine during substrate cleavage.</text>
</comment>
<comment type="miscellaneous">
    <text>Patatin have a dual role as a somatic storage protein and as an enzyme involved in host resistance.</text>
</comment>
<comment type="similarity">
    <text evidence="5">Belongs to the patatin family.</text>
</comment>
<reference key="1">
    <citation type="journal article" date="2006" name="Genetics">
        <title>Structural diversity and differential transcription of the patatin multicopy gene family during potato tuber development.</title>
        <authorList>
            <person name="Stupar R.M."/>
            <person name="Beaubien K.A."/>
            <person name="Jin W."/>
            <person name="Song J."/>
            <person name="Lee M.-K."/>
            <person name="Wu C."/>
            <person name="Zhang H.-B."/>
            <person name="Han B."/>
            <person name="Jiang J."/>
        </authorList>
    </citation>
    <scope>NUCLEOTIDE SEQUENCE [MRNA]</scope>
    <scope>DEVELOPMENTAL STAGE</scope>
    <scope>TISSUE SPECIFICITY</scope>
    <source>
        <strain>cv. Kennebec</strain>
    </source>
</reference>
<accession>Q2MY39</accession>
<dbReference type="EC" id="3.1.1.-"/>
<dbReference type="EMBL" id="DQ274499">
    <property type="protein sequence ID" value="ABC55699.1"/>
    <property type="molecule type" value="mRNA"/>
</dbReference>
<dbReference type="SMR" id="Q2MY39"/>
<dbReference type="InParanoid" id="Q2MY39"/>
<dbReference type="Proteomes" id="UP000011115">
    <property type="component" value="Unassembled WGS sequence"/>
</dbReference>
<dbReference type="ExpressionAtlas" id="Q2MY39">
    <property type="expression patterns" value="baseline"/>
</dbReference>
<dbReference type="GO" id="GO:0005773">
    <property type="term" value="C:vacuole"/>
    <property type="evidence" value="ECO:0007669"/>
    <property type="project" value="UniProtKB-SubCell"/>
</dbReference>
<dbReference type="GO" id="GO:0047372">
    <property type="term" value="F:monoacylglycerol lipase activity"/>
    <property type="evidence" value="ECO:0000318"/>
    <property type="project" value="GO_Central"/>
</dbReference>
<dbReference type="GO" id="GO:0045735">
    <property type="term" value="F:nutrient reservoir activity"/>
    <property type="evidence" value="ECO:0007669"/>
    <property type="project" value="UniProtKB-KW"/>
</dbReference>
<dbReference type="GO" id="GO:0004620">
    <property type="term" value="F:phospholipase activity"/>
    <property type="evidence" value="ECO:0000318"/>
    <property type="project" value="GO_Central"/>
</dbReference>
<dbReference type="GO" id="GO:0006952">
    <property type="term" value="P:defense response"/>
    <property type="evidence" value="ECO:0007669"/>
    <property type="project" value="UniProtKB-KW"/>
</dbReference>
<dbReference type="GO" id="GO:0016042">
    <property type="term" value="P:lipid catabolic process"/>
    <property type="evidence" value="ECO:0007669"/>
    <property type="project" value="UniProtKB-KW"/>
</dbReference>
<dbReference type="Gene3D" id="3.40.1090.10">
    <property type="entry name" value="Cytosolic phospholipase A2 catalytic domain"/>
    <property type="match status" value="1"/>
</dbReference>
<dbReference type="InterPro" id="IPR016035">
    <property type="entry name" value="Acyl_Trfase/lysoPLipase"/>
</dbReference>
<dbReference type="InterPro" id="IPR002641">
    <property type="entry name" value="PNPLA_dom"/>
</dbReference>
<dbReference type="PANTHER" id="PTHR32176:SF85">
    <property type="entry name" value="PATATIN GROUP D-2"/>
    <property type="match status" value="1"/>
</dbReference>
<dbReference type="PANTHER" id="PTHR32176">
    <property type="entry name" value="XYLOSE ISOMERASE"/>
    <property type="match status" value="1"/>
</dbReference>
<dbReference type="Pfam" id="PF01734">
    <property type="entry name" value="Patatin"/>
    <property type="match status" value="1"/>
</dbReference>
<dbReference type="SUPFAM" id="SSF52151">
    <property type="entry name" value="FabD/lysophospholipase-like"/>
    <property type="match status" value="1"/>
</dbReference>
<dbReference type="PROSITE" id="PS51635">
    <property type="entry name" value="PNPLA"/>
    <property type="match status" value="1"/>
</dbReference>
<evidence type="ECO:0000250" key="1"/>
<evidence type="ECO:0000255" key="2"/>
<evidence type="ECO:0000255" key="3">
    <source>
        <dbReference type="PROSITE-ProRule" id="PRU01161"/>
    </source>
</evidence>
<evidence type="ECO:0000269" key="4">
    <source>
    </source>
</evidence>
<evidence type="ECO:0000305" key="5"/>
<name>PAT12_SOLTU</name>
<keyword id="KW-0175">Coiled coil</keyword>
<keyword id="KW-0325">Glycoprotein</keyword>
<keyword id="KW-0378">Hydrolase</keyword>
<keyword id="KW-0442">Lipid degradation</keyword>
<keyword id="KW-0443">Lipid metabolism</keyword>
<keyword id="KW-0611">Plant defense</keyword>
<keyword id="KW-1185">Reference proteome</keyword>
<keyword id="KW-0732">Signal</keyword>
<keyword id="KW-0758">Storage protein</keyword>
<keyword id="KW-0926">Vacuole</keyword>
<protein>
    <recommendedName>
        <fullName>Patatin-12</fullName>
        <ecNumber>3.1.1.-</ecNumber>
    </recommendedName>
</protein>
<proteinExistence type="evidence at transcript level"/>
<organism>
    <name type="scientific">Solanum tuberosum</name>
    <name type="common">Potato</name>
    <dbReference type="NCBI Taxonomy" id="4113"/>
    <lineage>
        <taxon>Eukaryota</taxon>
        <taxon>Viridiplantae</taxon>
        <taxon>Streptophyta</taxon>
        <taxon>Embryophyta</taxon>
        <taxon>Tracheophyta</taxon>
        <taxon>Spermatophyta</taxon>
        <taxon>Magnoliopsida</taxon>
        <taxon>eudicotyledons</taxon>
        <taxon>Gunneridae</taxon>
        <taxon>Pentapetalae</taxon>
        <taxon>asterids</taxon>
        <taxon>lamiids</taxon>
        <taxon>Solanales</taxon>
        <taxon>Solanaceae</taxon>
        <taxon>Solanoideae</taxon>
        <taxon>Solaneae</taxon>
        <taxon>Solanum</taxon>
    </lineage>
</organism>
<sequence length="387" mass="42595">MATTKSFLILIVMILATTSSTFASLEEMVTVLSIDGGGIKGIIPGTILEFLGGQLQKMDNNADARLADYFDVIGGTSTGGLLTAMITTPNENNRPFAAANEIVPFYFEHGPHIFNSSTGQFFGPKYDGKYLMQVLQEKLGETRVHQALTEVAISSFDIKTNKPVIFTKSNLAKSPELDAKMYDICYSTAAAPIYFPPHYFITHTSNGDIYEFNLVDGGVATVGDPALLSLSVATRLAQEDPAFSSIKSLDYKQMLLLSLGTGTNSEFDKTYTAQEAAKWGPLRWMLAIRQMTNAASSYMADYYISTVFQARHSQNNYLRVQENALTGTTTEMDDASEANMELLVQVGETLLKKPVSKDSPETYEEALKRFAKLLSDRKKLRANKASY</sequence>
<feature type="signal peptide" evidence="2">
    <location>
        <begin position="1"/>
        <end position="23"/>
    </location>
</feature>
<feature type="chain" id="PRO_0000296697" description="Patatin-12">
    <location>
        <begin position="24"/>
        <end position="387"/>
    </location>
</feature>
<feature type="domain" description="PNPLA" evidence="3">
    <location>
        <begin position="32"/>
        <end position="230"/>
    </location>
</feature>
<feature type="coiled-coil region" evidence="2">
    <location>
        <begin position="322"/>
        <end position="385"/>
    </location>
</feature>
<feature type="short sequence motif" description="GXGXXG" evidence="3">
    <location>
        <begin position="36"/>
        <end position="41"/>
    </location>
</feature>
<feature type="short sequence motif" description="GXSXG" evidence="3">
    <location>
        <begin position="75"/>
        <end position="79"/>
    </location>
</feature>
<feature type="short sequence motif" description="DGA/G" evidence="3">
    <location>
        <begin position="216"/>
        <end position="218"/>
    </location>
</feature>
<feature type="active site" description="Nucleophile" evidence="3">
    <location>
        <position position="77"/>
    </location>
</feature>
<feature type="active site" description="Proton acceptor" evidence="3">
    <location>
        <position position="216"/>
    </location>
</feature>
<feature type="glycosylation site" description="N-linked (GlcNAc...) asparagine" evidence="2">
    <location>
        <position position="115"/>
    </location>
</feature>